<gene>
    <name evidence="1" type="primary">yoaH</name>
    <name type="ordered locus">SeD_A1493</name>
</gene>
<accession>B5FTL0</accession>
<protein>
    <recommendedName>
        <fullName evidence="1">UPF0181 protein YoaH</fullName>
    </recommendedName>
</protein>
<evidence type="ECO:0000255" key="1">
    <source>
        <dbReference type="HAMAP-Rule" id="MF_00507"/>
    </source>
</evidence>
<dbReference type="EMBL" id="CP001144">
    <property type="protein sequence ID" value="ACH76756.1"/>
    <property type="molecule type" value="Genomic_DNA"/>
</dbReference>
<dbReference type="RefSeq" id="WP_000457328.1">
    <property type="nucleotide sequence ID" value="NC_011205.1"/>
</dbReference>
<dbReference type="SMR" id="B5FTL0"/>
<dbReference type="KEGG" id="sed:SeD_A1493"/>
<dbReference type="HOGENOM" id="CLU_185263_0_0_6"/>
<dbReference type="Proteomes" id="UP000008322">
    <property type="component" value="Chromosome"/>
</dbReference>
<dbReference type="HAMAP" id="MF_00507">
    <property type="entry name" value="UPF0181"/>
    <property type="match status" value="1"/>
</dbReference>
<dbReference type="InterPro" id="IPR005371">
    <property type="entry name" value="UPF0181"/>
</dbReference>
<dbReference type="NCBIfam" id="NF003476">
    <property type="entry name" value="PRK05114.1"/>
    <property type="match status" value="1"/>
</dbReference>
<dbReference type="Pfam" id="PF03701">
    <property type="entry name" value="UPF0181"/>
    <property type="match status" value="1"/>
</dbReference>
<comment type="similarity">
    <text evidence="1">Belongs to the UPF0181 family.</text>
</comment>
<reference key="1">
    <citation type="journal article" date="2011" name="J. Bacteriol.">
        <title>Comparative genomics of 28 Salmonella enterica isolates: evidence for CRISPR-mediated adaptive sublineage evolution.</title>
        <authorList>
            <person name="Fricke W.F."/>
            <person name="Mammel M.K."/>
            <person name="McDermott P.F."/>
            <person name="Tartera C."/>
            <person name="White D.G."/>
            <person name="Leclerc J.E."/>
            <person name="Ravel J."/>
            <person name="Cebula T.A."/>
        </authorList>
    </citation>
    <scope>NUCLEOTIDE SEQUENCE [LARGE SCALE GENOMIC DNA]</scope>
    <source>
        <strain>CT_02021853</strain>
    </source>
</reference>
<name>YOAH_SALDC</name>
<proteinExistence type="inferred from homology"/>
<organism>
    <name type="scientific">Salmonella dublin (strain CT_02021853)</name>
    <dbReference type="NCBI Taxonomy" id="439851"/>
    <lineage>
        <taxon>Bacteria</taxon>
        <taxon>Pseudomonadati</taxon>
        <taxon>Pseudomonadota</taxon>
        <taxon>Gammaproteobacteria</taxon>
        <taxon>Enterobacterales</taxon>
        <taxon>Enterobacteriaceae</taxon>
        <taxon>Salmonella</taxon>
    </lineage>
</organism>
<sequence>MFAGLPSLSHEQQQKAVERIQELMSQGMSSGEAIAQVAGELRANHTGERIVARFEDEDE</sequence>
<feature type="chain" id="PRO_1000127054" description="UPF0181 protein YoaH">
    <location>
        <begin position="1"/>
        <end position="59"/>
    </location>
</feature>